<feature type="chain" id="PRO_0000206885" description="BET1 homolog">
    <location>
        <begin position="1"/>
        <end position="118"/>
    </location>
</feature>
<feature type="topological domain" description="Cytoplasmic" evidence="4">
    <location>
        <begin position="1"/>
        <end position="94"/>
    </location>
</feature>
<feature type="transmembrane region" description="Helical; Anchor for type IV membrane protein" evidence="4">
    <location>
        <begin position="95"/>
        <end position="115"/>
    </location>
</feature>
<feature type="topological domain" description="Vesicular" evidence="4">
    <location>
        <begin position="116"/>
        <end position="118"/>
    </location>
</feature>
<feature type="domain" description="t-SNARE coiled-coil homology" evidence="5">
    <location>
        <begin position="26"/>
        <end position="88"/>
    </location>
</feature>
<feature type="modified residue" description="Phosphoserine" evidence="7">
    <location>
        <position position="50"/>
    </location>
</feature>
<comment type="function">
    <text evidence="3">Required for vesicular transport from the ER to the Golgi complex. Functions as a SNARE involved in the docking process of ER-derived vesicles with the cis-Golgi membrane.</text>
</comment>
<comment type="subunit">
    <text evidence="2 3">Interacts with SNARE complex members GOSR2, SEC22B and STX5 (By similarity). Interacts with LMAN1/ERGIC53 (By similarity). Interacts with STX17 (By similarity).</text>
</comment>
<comment type="subcellular location">
    <subcellularLocation>
        <location evidence="1">Endoplasmic reticulum membrane</location>
        <topology evidence="1">Single-pass type IV membrane protein</topology>
    </subcellularLocation>
    <subcellularLocation>
        <location evidence="1">Golgi apparatus</location>
        <location evidence="1">cis-Golgi network membrane</location>
    </subcellularLocation>
    <subcellularLocation>
        <location evidence="1">Golgi apparatus membrane</location>
    </subcellularLocation>
    <text evidence="1">Concentrated most in the intermediate compartment/cis-Golgi network and the cis-Golgi cisternae 1 and 2. Greatly reduced in concentration at the trans end of the Golgi apparatus (By similarity).</text>
</comment>
<comment type="similarity">
    <text evidence="6">Belongs to the BET1 family.</text>
</comment>
<proteinExistence type="evidence at protein level"/>
<name>BET1_MOUSE</name>
<protein>
    <recommendedName>
        <fullName>BET1 homolog</fullName>
        <shortName>mBET1</shortName>
    </recommendedName>
    <alternativeName>
        <fullName>Golgi vesicular membrane-trafficking protein p18</fullName>
    </alternativeName>
</protein>
<gene>
    <name type="primary">Bet1</name>
</gene>
<dbReference type="EMBL" id="AF007552">
    <property type="protein sequence ID" value="AAB62942.1"/>
    <property type="molecule type" value="mRNA"/>
</dbReference>
<dbReference type="EMBL" id="BC005572">
    <property type="protein sequence ID" value="AAH05572.1"/>
    <property type="molecule type" value="mRNA"/>
</dbReference>
<dbReference type="CCDS" id="CCDS19895.1"/>
<dbReference type="RefSeq" id="NP_033878.1">
    <property type="nucleotide sequence ID" value="NM_009748.3"/>
</dbReference>
<dbReference type="SMR" id="O35623"/>
<dbReference type="BioGRID" id="198337">
    <property type="interactions" value="2"/>
</dbReference>
<dbReference type="FunCoup" id="O35623">
    <property type="interactions" value="2924"/>
</dbReference>
<dbReference type="STRING" id="10090.ENSMUSP00000044877"/>
<dbReference type="iPTMnet" id="O35623"/>
<dbReference type="PhosphoSitePlus" id="O35623"/>
<dbReference type="SwissPalm" id="O35623"/>
<dbReference type="jPOST" id="O35623"/>
<dbReference type="PaxDb" id="10090-ENSMUSP00000044877"/>
<dbReference type="PeptideAtlas" id="O35623"/>
<dbReference type="ProteomicsDB" id="273671"/>
<dbReference type="Pumba" id="O35623"/>
<dbReference type="TopDownProteomics" id="O35623"/>
<dbReference type="DNASU" id="12068"/>
<dbReference type="Ensembl" id="ENSMUST00000049166.5">
    <property type="protein sequence ID" value="ENSMUSP00000044877.5"/>
    <property type="gene ID" value="ENSMUSG00000032757.7"/>
</dbReference>
<dbReference type="GeneID" id="12068"/>
<dbReference type="KEGG" id="mmu:12068"/>
<dbReference type="UCSC" id="uc009avk.1">
    <property type="organism name" value="mouse"/>
</dbReference>
<dbReference type="AGR" id="MGI:1343104"/>
<dbReference type="CTD" id="10282"/>
<dbReference type="MGI" id="MGI:1343104">
    <property type="gene designation" value="Bet1"/>
</dbReference>
<dbReference type="VEuPathDB" id="HostDB:ENSMUSG00000032757"/>
<dbReference type="eggNOG" id="KOG3385">
    <property type="taxonomic scope" value="Eukaryota"/>
</dbReference>
<dbReference type="GeneTree" id="ENSGT00940000163414"/>
<dbReference type="HOGENOM" id="CLU_086133_2_1_1"/>
<dbReference type="InParanoid" id="O35623"/>
<dbReference type="OMA" id="KMDSARG"/>
<dbReference type="OrthoDB" id="261831at2759"/>
<dbReference type="PhylomeDB" id="O35623"/>
<dbReference type="TreeFam" id="TF323307"/>
<dbReference type="Reactome" id="R-MMU-204005">
    <property type="pathway name" value="COPII-mediated vesicle transport"/>
</dbReference>
<dbReference type="Reactome" id="R-MMU-6807878">
    <property type="pathway name" value="COPI-mediated anterograde transport"/>
</dbReference>
<dbReference type="BioGRID-ORCS" id="12068">
    <property type="hits" value="5 hits in 76 CRISPR screens"/>
</dbReference>
<dbReference type="ChiTaRS" id="Bet1">
    <property type="organism name" value="mouse"/>
</dbReference>
<dbReference type="PRO" id="PR:O35623"/>
<dbReference type="Proteomes" id="UP000000589">
    <property type="component" value="Chromosome 6"/>
</dbReference>
<dbReference type="RNAct" id="O35623">
    <property type="molecule type" value="protein"/>
</dbReference>
<dbReference type="Bgee" id="ENSMUSG00000032757">
    <property type="expression patterns" value="Expressed in gastrula and 253 other cell types or tissues"/>
</dbReference>
<dbReference type="GO" id="GO:0005801">
    <property type="term" value="C:cis-Golgi network"/>
    <property type="evidence" value="ECO:0000250"/>
    <property type="project" value="UniProtKB"/>
</dbReference>
<dbReference type="GO" id="GO:0005829">
    <property type="term" value="C:cytosol"/>
    <property type="evidence" value="ECO:0000266"/>
    <property type="project" value="MGI"/>
</dbReference>
<dbReference type="GO" id="GO:0005783">
    <property type="term" value="C:endoplasmic reticulum"/>
    <property type="evidence" value="ECO:0000250"/>
    <property type="project" value="UniProtKB"/>
</dbReference>
<dbReference type="GO" id="GO:0005789">
    <property type="term" value="C:endoplasmic reticulum membrane"/>
    <property type="evidence" value="ECO:0007669"/>
    <property type="project" value="UniProtKB-SubCell"/>
</dbReference>
<dbReference type="GO" id="GO:0000139">
    <property type="term" value="C:Golgi membrane"/>
    <property type="evidence" value="ECO:0000314"/>
    <property type="project" value="MGI"/>
</dbReference>
<dbReference type="GO" id="GO:0006888">
    <property type="term" value="P:endoplasmic reticulum to Golgi vesicle-mediated transport"/>
    <property type="evidence" value="ECO:0000250"/>
    <property type="project" value="UniProtKB"/>
</dbReference>
<dbReference type="GO" id="GO:0015031">
    <property type="term" value="P:protein transport"/>
    <property type="evidence" value="ECO:0007669"/>
    <property type="project" value="UniProtKB-KW"/>
</dbReference>
<dbReference type="GO" id="GO:0016192">
    <property type="term" value="P:vesicle-mediated transport"/>
    <property type="evidence" value="ECO:0000304"/>
    <property type="project" value="MGI"/>
</dbReference>
<dbReference type="CDD" id="cd15853">
    <property type="entry name" value="SNARE_Bet1"/>
    <property type="match status" value="1"/>
</dbReference>
<dbReference type="FunFam" id="1.20.5.110:FF:000026">
    <property type="entry name" value="BET1 homolog"/>
    <property type="match status" value="1"/>
</dbReference>
<dbReference type="Gene3D" id="1.20.5.110">
    <property type="match status" value="1"/>
</dbReference>
<dbReference type="InterPro" id="IPR039899">
    <property type="entry name" value="BET1_SNARE"/>
</dbReference>
<dbReference type="InterPro" id="IPR000727">
    <property type="entry name" value="T_SNARE_dom"/>
</dbReference>
<dbReference type="PANTHER" id="PTHR12791">
    <property type="entry name" value="GOLGI SNARE BET1-RELATED"/>
    <property type="match status" value="1"/>
</dbReference>
<dbReference type="SMART" id="SM00397">
    <property type="entry name" value="t_SNARE"/>
    <property type="match status" value="1"/>
</dbReference>
<dbReference type="SUPFAM" id="SSF58038">
    <property type="entry name" value="SNARE fusion complex"/>
    <property type="match status" value="1"/>
</dbReference>
<dbReference type="PROSITE" id="PS50192">
    <property type="entry name" value="T_SNARE"/>
    <property type="match status" value="1"/>
</dbReference>
<sequence>MRRAGLGDGAPPGSYGNYGYANTGYNACEEENDRLTESLRSKVTAIKSLSIEIGHEVKNQNKLLAEMDSQFDSTTGFLGKTMGRLKILSRGSQTKLLCYMMLFSLFVFFVIYWIIKLR</sequence>
<accession>O35623</accession>
<evidence type="ECO:0000250" key="1"/>
<evidence type="ECO:0000250" key="2">
    <source>
        <dbReference type="UniProtKB" id="O15155"/>
    </source>
</evidence>
<evidence type="ECO:0000250" key="3">
    <source>
        <dbReference type="UniProtKB" id="Q62896"/>
    </source>
</evidence>
<evidence type="ECO:0000255" key="4"/>
<evidence type="ECO:0000255" key="5">
    <source>
        <dbReference type="PROSITE-ProRule" id="PRU00202"/>
    </source>
</evidence>
<evidence type="ECO:0000305" key="6"/>
<evidence type="ECO:0007744" key="7">
    <source>
    </source>
</evidence>
<organism>
    <name type="scientific">Mus musculus</name>
    <name type="common">Mouse</name>
    <dbReference type="NCBI Taxonomy" id="10090"/>
    <lineage>
        <taxon>Eukaryota</taxon>
        <taxon>Metazoa</taxon>
        <taxon>Chordata</taxon>
        <taxon>Craniata</taxon>
        <taxon>Vertebrata</taxon>
        <taxon>Euteleostomi</taxon>
        <taxon>Mammalia</taxon>
        <taxon>Eutheria</taxon>
        <taxon>Euarchontoglires</taxon>
        <taxon>Glires</taxon>
        <taxon>Rodentia</taxon>
        <taxon>Myomorpha</taxon>
        <taxon>Muroidea</taxon>
        <taxon>Muridae</taxon>
        <taxon>Murinae</taxon>
        <taxon>Mus</taxon>
        <taxon>Mus</taxon>
    </lineage>
</organism>
<reference key="1">
    <citation type="journal article" date="1997" name="J. Cell Biol.">
        <title>The mammalian protein (rbet1) homologous to yeast Bet1p is primarily associated with the pre-Golgi intermediate compartment and is involved in vesicular transport from the endoplasmic reticulum to the Golgi apparatus.</title>
        <authorList>
            <person name="Zhang T."/>
            <person name="Wong S.H."/>
            <person name="Tang B.L."/>
            <person name="Xu Y."/>
            <person name="Peter F."/>
            <person name="Subramaniam V.N."/>
            <person name="Hong W."/>
        </authorList>
    </citation>
    <scope>NUCLEOTIDE SEQUENCE [MRNA]</scope>
</reference>
<reference key="2">
    <citation type="journal article" date="2004" name="Genome Res.">
        <title>The status, quality, and expansion of the NIH full-length cDNA project: the Mammalian Gene Collection (MGC).</title>
        <authorList>
            <consortium name="The MGC Project Team"/>
        </authorList>
    </citation>
    <scope>NUCLEOTIDE SEQUENCE [LARGE SCALE MRNA]</scope>
</reference>
<reference key="3">
    <citation type="journal article" date="2009" name="Immunity">
        <title>The phagosomal proteome in interferon-gamma-activated macrophages.</title>
        <authorList>
            <person name="Trost M."/>
            <person name="English L."/>
            <person name="Lemieux S."/>
            <person name="Courcelles M."/>
            <person name="Desjardins M."/>
            <person name="Thibault P."/>
        </authorList>
    </citation>
    <scope>PHOSPHORYLATION [LARGE SCALE ANALYSIS] AT SER-50</scope>
    <scope>IDENTIFICATION BY MASS SPECTROMETRY [LARGE SCALE ANALYSIS]</scope>
</reference>
<reference key="4">
    <citation type="journal article" date="2010" name="Cell">
        <title>A tissue-specific atlas of mouse protein phosphorylation and expression.</title>
        <authorList>
            <person name="Huttlin E.L."/>
            <person name="Jedrychowski M.P."/>
            <person name="Elias J.E."/>
            <person name="Goswami T."/>
            <person name="Rad R."/>
            <person name="Beausoleil S.A."/>
            <person name="Villen J."/>
            <person name="Haas W."/>
            <person name="Sowa M.E."/>
            <person name="Gygi S.P."/>
        </authorList>
    </citation>
    <scope>IDENTIFICATION BY MASS SPECTROMETRY [LARGE SCALE ANALYSIS]</scope>
    <source>
        <tissue>Brain</tissue>
        <tissue>Brown adipose tissue</tissue>
        <tissue>Heart</tissue>
        <tissue>Kidney</tissue>
        <tissue>Liver</tissue>
        <tissue>Lung</tissue>
        <tissue>Pancreas</tissue>
        <tissue>Spleen</tissue>
        <tissue>Testis</tissue>
    </source>
</reference>
<keyword id="KW-0175">Coiled coil</keyword>
<keyword id="KW-0256">Endoplasmic reticulum</keyword>
<keyword id="KW-0931">ER-Golgi transport</keyword>
<keyword id="KW-0333">Golgi apparatus</keyword>
<keyword id="KW-0472">Membrane</keyword>
<keyword id="KW-0597">Phosphoprotein</keyword>
<keyword id="KW-0653">Protein transport</keyword>
<keyword id="KW-1185">Reference proteome</keyword>
<keyword id="KW-0812">Transmembrane</keyword>
<keyword id="KW-1133">Transmembrane helix</keyword>
<keyword id="KW-0813">Transport</keyword>